<keyword id="KW-0067">ATP-binding</keyword>
<keyword id="KW-0963">Cytoplasm</keyword>
<keyword id="KW-1015">Disulfide bond</keyword>
<keyword id="KW-0547">Nucleotide-binding</keyword>
<keyword id="KW-1185">Reference proteome</keyword>
<keyword id="KW-0694">RNA-binding</keyword>
<keyword id="KW-0808">Transferase</keyword>
<keyword id="KW-0819">tRNA processing</keyword>
<keyword id="KW-0820">tRNA-binding</keyword>
<dbReference type="EC" id="2.8.1.13" evidence="1"/>
<dbReference type="EMBL" id="CP000930">
    <property type="protein sequence ID" value="ABZ84424.1"/>
    <property type="molecule type" value="Genomic_DNA"/>
</dbReference>
<dbReference type="RefSeq" id="WP_012282928.1">
    <property type="nucleotide sequence ID" value="NC_010337.2"/>
</dbReference>
<dbReference type="SMR" id="B0TFA7"/>
<dbReference type="STRING" id="498761.HM1_1866"/>
<dbReference type="KEGG" id="hmo:HM1_1866"/>
<dbReference type="eggNOG" id="COG0482">
    <property type="taxonomic scope" value="Bacteria"/>
</dbReference>
<dbReference type="HOGENOM" id="CLU_035188_0_0_9"/>
<dbReference type="Proteomes" id="UP000008550">
    <property type="component" value="Chromosome"/>
</dbReference>
<dbReference type="GO" id="GO:0005737">
    <property type="term" value="C:cytoplasm"/>
    <property type="evidence" value="ECO:0007669"/>
    <property type="project" value="UniProtKB-SubCell"/>
</dbReference>
<dbReference type="GO" id="GO:0005524">
    <property type="term" value="F:ATP binding"/>
    <property type="evidence" value="ECO:0007669"/>
    <property type="project" value="UniProtKB-KW"/>
</dbReference>
<dbReference type="GO" id="GO:0000049">
    <property type="term" value="F:tRNA binding"/>
    <property type="evidence" value="ECO:0007669"/>
    <property type="project" value="UniProtKB-KW"/>
</dbReference>
<dbReference type="GO" id="GO:0103016">
    <property type="term" value="F:tRNA-uridine 2-sulfurtransferase activity"/>
    <property type="evidence" value="ECO:0007669"/>
    <property type="project" value="UniProtKB-EC"/>
</dbReference>
<dbReference type="GO" id="GO:0002143">
    <property type="term" value="P:tRNA wobble position uridine thiolation"/>
    <property type="evidence" value="ECO:0007669"/>
    <property type="project" value="TreeGrafter"/>
</dbReference>
<dbReference type="CDD" id="cd01998">
    <property type="entry name" value="MnmA_TRMU-like"/>
    <property type="match status" value="1"/>
</dbReference>
<dbReference type="FunFam" id="2.30.30.280:FF:000001">
    <property type="entry name" value="tRNA-specific 2-thiouridylase MnmA"/>
    <property type="match status" value="1"/>
</dbReference>
<dbReference type="FunFam" id="3.40.50.620:FF:000115">
    <property type="entry name" value="tRNA-specific 2-thiouridylase MnmA"/>
    <property type="match status" value="1"/>
</dbReference>
<dbReference type="Gene3D" id="2.30.30.280">
    <property type="entry name" value="Adenine nucleotide alpha hydrolases-like domains"/>
    <property type="match status" value="1"/>
</dbReference>
<dbReference type="Gene3D" id="3.40.50.620">
    <property type="entry name" value="HUPs"/>
    <property type="match status" value="1"/>
</dbReference>
<dbReference type="Gene3D" id="2.40.30.10">
    <property type="entry name" value="Translation factors"/>
    <property type="match status" value="1"/>
</dbReference>
<dbReference type="HAMAP" id="MF_00144">
    <property type="entry name" value="tRNA_thiouridyl_MnmA"/>
    <property type="match status" value="1"/>
</dbReference>
<dbReference type="InterPro" id="IPR004506">
    <property type="entry name" value="MnmA-like"/>
</dbReference>
<dbReference type="InterPro" id="IPR046885">
    <property type="entry name" value="MnmA-like_C"/>
</dbReference>
<dbReference type="InterPro" id="IPR046884">
    <property type="entry name" value="MnmA-like_central"/>
</dbReference>
<dbReference type="InterPro" id="IPR023382">
    <property type="entry name" value="MnmA-like_central_sf"/>
</dbReference>
<dbReference type="InterPro" id="IPR014729">
    <property type="entry name" value="Rossmann-like_a/b/a_fold"/>
</dbReference>
<dbReference type="NCBIfam" id="NF001138">
    <property type="entry name" value="PRK00143.1"/>
    <property type="match status" value="1"/>
</dbReference>
<dbReference type="NCBIfam" id="TIGR00420">
    <property type="entry name" value="trmU"/>
    <property type="match status" value="1"/>
</dbReference>
<dbReference type="PANTHER" id="PTHR11933:SF5">
    <property type="entry name" value="MITOCHONDRIAL TRNA-SPECIFIC 2-THIOURIDYLASE 1"/>
    <property type="match status" value="1"/>
</dbReference>
<dbReference type="PANTHER" id="PTHR11933">
    <property type="entry name" value="TRNA 5-METHYLAMINOMETHYL-2-THIOURIDYLATE -METHYLTRANSFERASE"/>
    <property type="match status" value="1"/>
</dbReference>
<dbReference type="Pfam" id="PF03054">
    <property type="entry name" value="tRNA_Me_trans"/>
    <property type="match status" value="1"/>
</dbReference>
<dbReference type="Pfam" id="PF20258">
    <property type="entry name" value="tRNA_Me_trans_C"/>
    <property type="match status" value="1"/>
</dbReference>
<dbReference type="Pfam" id="PF20259">
    <property type="entry name" value="tRNA_Me_trans_M"/>
    <property type="match status" value="1"/>
</dbReference>
<dbReference type="SUPFAM" id="SSF52402">
    <property type="entry name" value="Adenine nucleotide alpha hydrolases-like"/>
    <property type="match status" value="1"/>
</dbReference>
<evidence type="ECO:0000255" key="1">
    <source>
        <dbReference type="HAMAP-Rule" id="MF_00144"/>
    </source>
</evidence>
<proteinExistence type="inferred from homology"/>
<feature type="chain" id="PRO_0000349661" description="tRNA-specific 2-thiouridylase MnmA">
    <location>
        <begin position="1"/>
        <end position="385"/>
    </location>
</feature>
<feature type="region of interest" description="Interaction with tRNA" evidence="1">
    <location>
        <begin position="150"/>
        <end position="152"/>
    </location>
</feature>
<feature type="region of interest" description="Interaction with tRNA" evidence="1">
    <location>
        <begin position="307"/>
        <end position="308"/>
    </location>
</feature>
<feature type="active site" description="Nucleophile" evidence="1">
    <location>
        <position position="102"/>
    </location>
</feature>
<feature type="active site" description="Cysteine persulfide intermediate" evidence="1">
    <location>
        <position position="200"/>
    </location>
</feature>
<feature type="binding site" evidence="1">
    <location>
        <begin position="8"/>
        <end position="15"/>
    </location>
    <ligand>
        <name>ATP</name>
        <dbReference type="ChEBI" id="CHEBI:30616"/>
    </ligand>
</feature>
<feature type="binding site" evidence="1">
    <location>
        <position position="34"/>
    </location>
    <ligand>
        <name>ATP</name>
        <dbReference type="ChEBI" id="CHEBI:30616"/>
    </ligand>
</feature>
<feature type="binding site" evidence="1">
    <location>
        <position position="126"/>
    </location>
    <ligand>
        <name>ATP</name>
        <dbReference type="ChEBI" id="CHEBI:30616"/>
    </ligand>
</feature>
<feature type="site" description="Interaction with tRNA" evidence="1">
    <location>
        <position position="127"/>
    </location>
</feature>
<feature type="site" description="Interaction with tRNA" evidence="1">
    <location>
        <position position="341"/>
    </location>
</feature>
<feature type="disulfide bond" description="Alternate" evidence="1">
    <location>
        <begin position="102"/>
        <end position="200"/>
    </location>
</feature>
<sequence>MKETVVVAMSGGVDSSVTAALLLEQGYDVIGVTLQIWPKDAPEGAEGGCCSLSAVEDAKRVASKLGVPHYVLNFRDYFETEVIEYFGREYLAGQTPNPCIRCNRVIKFEGLLQKSLALGAAKVATGHYARIEQDSATGRYRLGRGIDANKDQSYALFNMTQEQLSRTLFPLGGFTKPEIREKAAQLGLAVASKPDSQEICFIPDNDYRRFLEERYPDHRFQPGPFVDQEGNVIGTHRGLPFYTVGQRKGLGVAFGFPAYVIALDVEHNAVVIGPDEAVKGRRLLADDLNWIDIAGLKAPMEVEAKIRYSASPAIAVISPVKDGSAVIVEFAAPQRAITPGQAVVFYRGDWVVGGGTIVRNLDLKLPEIRHPEPKPVKGVKAKGRV</sequence>
<protein>
    <recommendedName>
        <fullName evidence="1">tRNA-specific 2-thiouridylase MnmA</fullName>
        <ecNumber evidence="1">2.8.1.13</ecNumber>
    </recommendedName>
</protein>
<organism>
    <name type="scientific">Heliobacterium modesticaldum (strain ATCC 51547 / Ice1)</name>
    <dbReference type="NCBI Taxonomy" id="498761"/>
    <lineage>
        <taxon>Bacteria</taxon>
        <taxon>Bacillati</taxon>
        <taxon>Bacillota</taxon>
        <taxon>Clostridia</taxon>
        <taxon>Eubacteriales</taxon>
        <taxon>Heliobacteriaceae</taxon>
        <taxon>Heliomicrobium</taxon>
    </lineage>
</organism>
<comment type="function">
    <text evidence="1">Catalyzes the 2-thiolation of uridine at the wobble position (U34) of tRNA, leading to the formation of s(2)U34.</text>
</comment>
<comment type="catalytic activity">
    <reaction evidence="1">
        <text>S-sulfanyl-L-cysteinyl-[protein] + uridine(34) in tRNA + AH2 + ATP = 2-thiouridine(34) in tRNA + L-cysteinyl-[protein] + A + AMP + diphosphate + H(+)</text>
        <dbReference type="Rhea" id="RHEA:47032"/>
        <dbReference type="Rhea" id="RHEA-COMP:10131"/>
        <dbReference type="Rhea" id="RHEA-COMP:11726"/>
        <dbReference type="Rhea" id="RHEA-COMP:11727"/>
        <dbReference type="Rhea" id="RHEA-COMP:11728"/>
        <dbReference type="ChEBI" id="CHEBI:13193"/>
        <dbReference type="ChEBI" id="CHEBI:15378"/>
        <dbReference type="ChEBI" id="CHEBI:17499"/>
        <dbReference type="ChEBI" id="CHEBI:29950"/>
        <dbReference type="ChEBI" id="CHEBI:30616"/>
        <dbReference type="ChEBI" id="CHEBI:33019"/>
        <dbReference type="ChEBI" id="CHEBI:61963"/>
        <dbReference type="ChEBI" id="CHEBI:65315"/>
        <dbReference type="ChEBI" id="CHEBI:87170"/>
        <dbReference type="ChEBI" id="CHEBI:456215"/>
        <dbReference type="EC" id="2.8.1.13"/>
    </reaction>
</comment>
<comment type="subcellular location">
    <subcellularLocation>
        <location evidence="1">Cytoplasm</location>
    </subcellularLocation>
</comment>
<comment type="similarity">
    <text evidence="1">Belongs to the MnmA/TRMU family.</text>
</comment>
<name>MNMA_HELMI</name>
<accession>B0TFA7</accession>
<reference key="1">
    <citation type="journal article" date="2008" name="J. Bacteriol.">
        <title>The genome of Heliobacterium modesticaldum, a phototrophic representative of the Firmicutes containing the simplest photosynthetic apparatus.</title>
        <authorList>
            <person name="Sattley W.M."/>
            <person name="Madigan M.T."/>
            <person name="Swingley W.D."/>
            <person name="Cheung P.C."/>
            <person name="Clocksin K.M."/>
            <person name="Conrad A.L."/>
            <person name="Dejesa L.C."/>
            <person name="Honchak B.M."/>
            <person name="Jung D.O."/>
            <person name="Karbach L.E."/>
            <person name="Kurdoglu A."/>
            <person name="Lahiri S."/>
            <person name="Mastrian S.D."/>
            <person name="Page L.E."/>
            <person name="Taylor H.L."/>
            <person name="Wang Z.T."/>
            <person name="Raymond J."/>
            <person name="Chen M."/>
            <person name="Blankenship R.E."/>
            <person name="Touchman J.W."/>
        </authorList>
    </citation>
    <scope>NUCLEOTIDE SEQUENCE [LARGE SCALE GENOMIC DNA]</scope>
    <source>
        <strain>ATCC 51547 / Ice1</strain>
    </source>
</reference>
<gene>
    <name evidence="1" type="primary">mnmA</name>
    <name type="ordered locus">Helmi_17990</name>
    <name type="ORF">HM1_1866</name>
</gene>